<gene>
    <name type="primary">GAST</name>
    <name type="synonym">GAS</name>
</gene>
<dbReference type="PIR" id="A29541">
    <property type="entry name" value="A29541"/>
</dbReference>
<dbReference type="PIR" id="B29541">
    <property type="entry name" value="B29541"/>
</dbReference>
<dbReference type="GO" id="GO:0005615">
    <property type="term" value="C:extracellular space"/>
    <property type="evidence" value="ECO:0007669"/>
    <property type="project" value="TreeGrafter"/>
</dbReference>
<dbReference type="GO" id="GO:0005179">
    <property type="term" value="F:hormone activity"/>
    <property type="evidence" value="ECO:0007669"/>
    <property type="project" value="UniProtKB-KW"/>
</dbReference>
<dbReference type="GO" id="GO:0007186">
    <property type="term" value="P:G protein-coupled receptor signaling pathway"/>
    <property type="evidence" value="ECO:0007669"/>
    <property type="project" value="TreeGrafter"/>
</dbReference>
<dbReference type="GO" id="GO:0032094">
    <property type="term" value="P:response to food"/>
    <property type="evidence" value="ECO:0007669"/>
    <property type="project" value="TreeGrafter"/>
</dbReference>
<dbReference type="InterPro" id="IPR039236">
    <property type="entry name" value="GAST"/>
</dbReference>
<dbReference type="InterPro" id="IPR013152">
    <property type="entry name" value="Gastrin/cholecystokinin_CS"/>
</dbReference>
<dbReference type="PANTHER" id="PTHR19309">
    <property type="entry name" value="GASTRIN"/>
    <property type="match status" value="1"/>
</dbReference>
<dbReference type="PANTHER" id="PTHR19309:SF0">
    <property type="entry name" value="GASTRIN"/>
    <property type="match status" value="1"/>
</dbReference>
<dbReference type="PROSITE" id="PS00259">
    <property type="entry name" value="GASTRIN"/>
    <property type="match status" value="1"/>
</dbReference>
<sequence length="33" mass="3715">ELEPQGPPHLGTDLSKKQGPWAEEEAAYGWMDF</sequence>
<reference key="1">
    <citation type="journal article" date="1987" name="Biochem. Biophys. Res. Commun.">
        <title>Chinchilla 'big' and 'little' gastrins.</title>
        <authorList>
            <person name="Shinomura Y."/>
            <person name="Eng J."/>
            <person name="Yalow R.S."/>
        </authorList>
    </citation>
    <scope>PROTEIN SEQUENCE</scope>
    <scope>PYROGLUTAMATE FORMATION AT GLN-18</scope>
    <scope>SULFATION AT TYR-28</scope>
    <scope>AMIDATION AT PHE-33</scope>
</reference>
<organism>
    <name type="scientific">Chinchilla chinchilla</name>
    <name type="common">Short-tailed chinchilla</name>
    <name type="synonym">Chinchilla brevicaudata</name>
    <dbReference type="NCBI Taxonomy" id="10152"/>
    <lineage>
        <taxon>Eukaryota</taxon>
        <taxon>Metazoa</taxon>
        <taxon>Chordata</taxon>
        <taxon>Craniata</taxon>
        <taxon>Vertebrata</taxon>
        <taxon>Euteleostomi</taxon>
        <taxon>Mammalia</taxon>
        <taxon>Eutheria</taxon>
        <taxon>Euarchontoglires</taxon>
        <taxon>Glires</taxon>
        <taxon>Rodentia</taxon>
        <taxon>Hystricomorpha</taxon>
        <taxon>Chinchillidae</taxon>
        <taxon>Chinchilla</taxon>
    </lineage>
</organism>
<feature type="peptide" id="PRO_0000010621" description="Big gastrin">
    <location>
        <begin position="1"/>
        <end position="33"/>
    </location>
</feature>
<feature type="peptide" id="PRO_0000010622" description="Gastrin">
    <location>
        <begin position="18"/>
        <end position="33"/>
    </location>
</feature>
<feature type="region of interest" description="Disordered" evidence="1">
    <location>
        <begin position="1"/>
        <end position="21"/>
    </location>
</feature>
<feature type="modified residue" description="Pyrrolidone carboxylic acid" evidence="2">
    <location>
        <position position="18"/>
    </location>
</feature>
<feature type="modified residue" description="Sulfotyrosine" evidence="2">
    <location>
        <position position="28"/>
    </location>
</feature>
<feature type="modified residue" description="Phenylalanine amide" evidence="2">
    <location>
        <position position="33"/>
    </location>
</feature>
<accession>P10034</accession>
<protein>
    <recommendedName>
        <fullName>Gastrin</fullName>
    </recommendedName>
    <component>
        <recommendedName>
            <fullName>Big gastrin</fullName>
        </recommendedName>
        <alternativeName>
            <fullName>Gastrin-33</fullName>
            <shortName>G33</shortName>
        </alternativeName>
    </component>
    <component>
        <recommendedName>
            <fullName>Gastrin</fullName>
        </recommendedName>
    </component>
</protein>
<evidence type="ECO:0000256" key="1">
    <source>
        <dbReference type="SAM" id="MobiDB-lite"/>
    </source>
</evidence>
<evidence type="ECO:0000269" key="2">
    <source>
    </source>
</evidence>
<evidence type="ECO:0000305" key="3"/>
<proteinExistence type="evidence at protein level"/>
<comment type="function">
    <text>Gastrin stimulates the stomach mucosa to produce and secrete hydrochloric acid and the pancreas to secrete its digestive enzymes. It also stimulates smooth muscle contraction and increases blood circulation and water secretion in the stomach and intestine.</text>
</comment>
<comment type="subcellular location">
    <subcellularLocation>
        <location>Secreted</location>
    </subcellularLocation>
</comment>
<comment type="similarity">
    <text evidence="3">Belongs to the gastrin/cholecystokinin family.</text>
</comment>
<name>GAST_CHICH</name>
<keyword id="KW-0027">Amidation</keyword>
<keyword id="KW-0165">Cleavage on pair of basic residues</keyword>
<keyword id="KW-0903">Direct protein sequencing</keyword>
<keyword id="KW-0372">Hormone</keyword>
<keyword id="KW-0873">Pyrrolidone carboxylic acid</keyword>
<keyword id="KW-0964">Secreted</keyword>
<keyword id="KW-0765">Sulfation</keyword>